<organism>
    <name type="scientific">Mus musculus</name>
    <name type="common">Mouse</name>
    <dbReference type="NCBI Taxonomy" id="10090"/>
    <lineage>
        <taxon>Eukaryota</taxon>
        <taxon>Metazoa</taxon>
        <taxon>Chordata</taxon>
        <taxon>Craniata</taxon>
        <taxon>Vertebrata</taxon>
        <taxon>Euteleostomi</taxon>
        <taxon>Mammalia</taxon>
        <taxon>Eutheria</taxon>
        <taxon>Euarchontoglires</taxon>
        <taxon>Glires</taxon>
        <taxon>Rodentia</taxon>
        <taxon>Myomorpha</taxon>
        <taxon>Muroidea</taxon>
        <taxon>Muridae</taxon>
        <taxon>Murinae</taxon>
        <taxon>Mus</taxon>
        <taxon>Mus</taxon>
    </lineage>
</organism>
<keyword id="KW-0010">Activator</keyword>
<keyword id="KW-0217">Developmental protein</keyword>
<keyword id="KW-0221">Differentiation</keyword>
<keyword id="KW-0238">DNA-binding</keyword>
<keyword id="KW-1017">Isopeptide bond</keyword>
<keyword id="KW-0469">Meiosis</keyword>
<keyword id="KW-0479">Metal-binding</keyword>
<keyword id="KW-0539">Nucleus</keyword>
<keyword id="KW-0896">Oogenesis</keyword>
<keyword id="KW-1185">Reference proteome</keyword>
<keyword id="KW-0677">Repeat</keyword>
<keyword id="KW-0744">Spermatogenesis</keyword>
<keyword id="KW-0804">Transcription</keyword>
<keyword id="KW-0805">Transcription regulation</keyword>
<keyword id="KW-0832">Ubl conjugation</keyword>
<keyword id="KW-0862">Zinc</keyword>
<keyword id="KW-0863">Zinc-finger</keyword>
<accession>Q07231</accession>
<accession>Q921V2</accession>
<dbReference type="EMBL" id="D10630">
    <property type="protein sequence ID" value="BAA01480.1"/>
    <property type="molecule type" value="mRNA"/>
</dbReference>
<dbReference type="EMBL" id="X63747">
    <property type="protein sequence ID" value="CAA45280.1"/>
    <property type="molecule type" value="mRNA"/>
</dbReference>
<dbReference type="EMBL" id="U41671">
    <property type="protein sequence ID" value="AAB03786.1"/>
    <property type="molecule type" value="mRNA"/>
</dbReference>
<dbReference type="EMBL" id="AK146875">
    <property type="protein sequence ID" value="BAE27498.1"/>
    <property type="molecule type" value="mRNA"/>
</dbReference>
<dbReference type="EMBL" id="CH466529">
    <property type="protein sequence ID" value="EDL19218.1"/>
    <property type="molecule type" value="Genomic_DNA"/>
</dbReference>
<dbReference type="EMBL" id="BC010591">
    <property type="protein sequence ID" value="AAH10591.1"/>
    <property type="molecule type" value="mRNA"/>
</dbReference>
<dbReference type="CCDS" id="CCDS19790.1"/>
<dbReference type="PIR" id="A56560">
    <property type="entry name" value="A56560"/>
</dbReference>
<dbReference type="RefSeq" id="NP_001038168.1">
    <property type="nucleotide sequence ID" value="NM_001044703.2"/>
</dbReference>
<dbReference type="RefSeq" id="NP_001038169.1">
    <property type="nucleotide sequence ID" value="NM_001044704.2"/>
</dbReference>
<dbReference type="RefSeq" id="NP_001038170.1">
    <property type="nucleotide sequence ID" value="NM_001044705.2"/>
</dbReference>
<dbReference type="RefSeq" id="NP_035887.2">
    <property type="nucleotide sequence ID" value="NM_011757.3"/>
</dbReference>
<dbReference type="RefSeq" id="XP_011239244.1">
    <property type="nucleotide sequence ID" value="XM_011240942.1"/>
</dbReference>
<dbReference type="SMR" id="Q07231"/>
<dbReference type="BioGRID" id="204660">
    <property type="interactions" value="28"/>
</dbReference>
<dbReference type="FunCoup" id="Q07231">
    <property type="interactions" value="1246"/>
</dbReference>
<dbReference type="IntAct" id="Q07231">
    <property type="interactions" value="1"/>
</dbReference>
<dbReference type="STRING" id="10090.ENSMUSP00000106584"/>
<dbReference type="iPTMnet" id="Q07231"/>
<dbReference type="PhosphoSitePlus" id="Q07231"/>
<dbReference type="SwissPalm" id="Q07231"/>
<dbReference type="PaxDb" id="10090-ENSMUSP00000106584"/>
<dbReference type="PeptideAtlas" id="Q07231"/>
<dbReference type="ProteomicsDB" id="275246"/>
<dbReference type="Pumba" id="Q07231"/>
<dbReference type="Antibodypedia" id="16310">
    <property type="antibodies" value="420 antibodies from 30 providers"/>
</dbReference>
<dbReference type="DNASU" id="22697"/>
<dbReference type="Ensembl" id="ENSMUST00000062350.15">
    <property type="protein sequence ID" value="ENSMUSP00000053430.9"/>
    <property type="gene ID" value="ENSMUSG00000037017.16"/>
</dbReference>
<dbReference type="Ensembl" id="ENSMUST00000080732.10">
    <property type="protein sequence ID" value="ENSMUSP00000079557.4"/>
    <property type="gene ID" value="ENSMUSG00000037017.16"/>
</dbReference>
<dbReference type="Ensembl" id="ENSMUST00000110959.2">
    <property type="protein sequence ID" value="ENSMUSP00000106584.2"/>
    <property type="gene ID" value="ENSMUSG00000037017.16"/>
</dbReference>
<dbReference type="Ensembl" id="ENSMUST00000110960.9">
    <property type="protein sequence ID" value="ENSMUSP00000106585.3"/>
    <property type="gene ID" value="ENSMUSG00000037017.16"/>
</dbReference>
<dbReference type="Ensembl" id="ENSMUST00000110961.9">
    <property type="protein sequence ID" value="ENSMUSP00000106586.3"/>
    <property type="gene ID" value="ENSMUSG00000037017.16"/>
</dbReference>
<dbReference type="GeneID" id="22697"/>
<dbReference type="KEGG" id="mmu:22697"/>
<dbReference type="UCSC" id="uc009aem.2">
    <property type="organism name" value="mouse"/>
</dbReference>
<dbReference type="AGR" id="MGI:99182"/>
<dbReference type="CTD" id="7589"/>
<dbReference type="MGI" id="MGI:99182">
    <property type="gene designation" value="Zscan21"/>
</dbReference>
<dbReference type="VEuPathDB" id="HostDB:ENSMUSG00000037017"/>
<dbReference type="eggNOG" id="KOG1721">
    <property type="taxonomic scope" value="Eukaryota"/>
</dbReference>
<dbReference type="GeneTree" id="ENSGT00940000161607"/>
<dbReference type="HOGENOM" id="CLU_002678_49_4_1"/>
<dbReference type="InParanoid" id="Q07231"/>
<dbReference type="OMA" id="WEPLYIQ"/>
<dbReference type="OrthoDB" id="6077919at2759"/>
<dbReference type="PhylomeDB" id="Q07231"/>
<dbReference type="TreeFam" id="TF338304"/>
<dbReference type="BioGRID-ORCS" id="22697">
    <property type="hits" value="1 hit in 78 CRISPR screens"/>
</dbReference>
<dbReference type="PRO" id="PR:Q07231"/>
<dbReference type="Proteomes" id="UP000000589">
    <property type="component" value="Chromosome 5"/>
</dbReference>
<dbReference type="RNAct" id="Q07231">
    <property type="molecule type" value="protein"/>
</dbReference>
<dbReference type="Bgee" id="ENSMUSG00000037017">
    <property type="expression patterns" value="Expressed in ear vesicle and 264 other cell types or tissues"/>
</dbReference>
<dbReference type="ExpressionAtlas" id="Q07231">
    <property type="expression patterns" value="baseline and differential"/>
</dbReference>
<dbReference type="GO" id="GO:0005634">
    <property type="term" value="C:nucleus"/>
    <property type="evidence" value="ECO:0000314"/>
    <property type="project" value="MGI"/>
</dbReference>
<dbReference type="GO" id="GO:0003677">
    <property type="term" value="F:DNA binding"/>
    <property type="evidence" value="ECO:0000314"/>
    <property type="project" value="MGI"/>
</dbReference>
<dbReference type="GO" id="GO:0001228">
    <property type="term" value="F:DNA-binding transcription activator activity, RNA polymerase II-specific"/>
    <property type="evidence" value="ECO:0007669"/>
    <property type="project" value="Ensembl"/>
</dbReference>
<dbReference type="GO" id="GO:0000978">
    <property type="term" value="F:RNA polymerase II cis-regulatory region sequence-specific DNA binding"/>
    <property type="evidence" value="ECO:0007669"/>
    <property type="project" value="Ensembl"/>
</dbReference>
<dbReference type="GO" id="GO:0008270">
    <property type="term" value="F:zinc ion binding"/>
    <property type="evidence" value="ECO:0007669"/>
    <property type="project" value="UniProtKB-KW"/>
</dbReference>
<dbReference type="GO" id="GO:0007141">
    <property type="term" value="P:male meiosis I"/>
    <property type="evidence" value="ECO:0000315"/>
    <property type="project" value="UniProtKB"/>
</dbReference>
<dbReference type="GO" id="GO:0048477">
    <property type="term" value="P:oogenesis"/>
    <property type="evidence" value="ECO:0007669"/>
    <property type="project" value="UniProtKB-KW"/>
</dbReference>
<dbReference type="GO" id="GO:0045893">
    <property type="term" value="P:positive regulation of DNA-templated transcription"/>
    <property type="evidence" value="ECO:0000314"/>
    <property type="project" value="MGI"/>
</dbReference>
<dbReference type="GO" id="GO:0007283">
    <property type="term" value="P:spermatogenesis"/>
    <property type="evidence" value="ECO:0000315"/>
    <property type="project" value="UniProtKB"/>
</dbReference>
<dbReference type="CDD" id="cd07936">
    <property type="entry name" value="SCAN"/>
    <property type="match status" value="1"/>
</dbReference>
<dbReference type="FunFam" id="3.30.160.60:FF:000172">
    <property type="entry name" value="Zinc finger and SCAN domain containing 21"/>
    <property type="match status" value="2"/>
</dbReference>
<dbReference type="FunFam" id="3.30.160.60:FF:000151">
    <property type="entry name" value="Zinc finger and SCAN domain-containing 21"/>
    <property type="match status" value="1"/>
</dbReference>
<dbReference type="FunFam" id="3.30.160.60:FF:000467">
    <property type="entry name" value="Zinc finger and SCAN domain-containing 21"/>
    <property type="match status" value="1"/>
</dbReference>
<dbReference type="FunFam" id="3.30.160.60:FF:000955">
    <property type="entry name" value="Zinc finger and SCAN domain-containing protein 21"/>
    <property type="match status" value="1"/>
</dbReference>
<dbReference type="FunFam" id="3.30.160.60:FF:001047">
    <property type="entry name" value="Zinc finger and SCAN domain-containing protein 21"/>
    <property type="match status" value="1"/>
</dbReference>
<dbReference type="FunFam" id="1.10.4020.10:FF:000001">
    <property type="entry name" value="zinc finger protein 263 isoform X1"/>
    <property type="match status" value="1"/>
</dbReference>
<dbReference type="FunFam" id="3.30.160.60:FF:002343">
    <property type="entry name" value="Zinc finger protein 33A"/>
    <property type="match status" value="1"/>
</dbReference>
<dbReference type="Gene3D" id="3.30.160.60">
    <property type="entry name" value="Classic Zinc Finger"/>
    <property type="match status" value="7"/>
</dbReference>
<dbReference type="Gene3D" id="1.10.4020.10">
    <property type="entry name" value="DNA breaking-rejoining enzymes"/>
    <property type="match status" value="1"/>
</dbReference>
<dbReference type="InterPro" id="IPR003309">
    <property type="entry name" value="SCAN_dom"/>
</dbReference>
<dbReference type="InterPro" id="IPR038269">
    <property type="entry name" value="SCAN_sf"/>
</dbReference>
<dbReference type="InterPro" id="IPR036236">
    <property type="entry name" value="Znf_C2H2_sf"/>
</dbReference>
<dbReference type="InterPro" id="IPR013087">
    <property type="entry name" value="Znf_C2H2_type"/>
</dbReference>
<dbReference type="PANTHER" id="PTHR23226">
    <property type="entry name" value="ZINC FINGER AND SCAN DOMAIN-CONTAINING"/>
    <property type="match status" value="1"/>
</dbReference>
<dbReference type="PANTHER" id="PTHR23226:SF52">
    <property type="entry name" value="ZINC FINGER AND SCAN DOMAIN-CONTAINING PROTEIN 16"/>
    <property type="match status" value="1"/>
</dbReference>
<dbReference type="Pfam" id="PF02023">
    <property type="entry name" value="SCAN"/>
    <property type="match status" value="1"/>
</dbReference>
<dbReference type="Pfam" id="PF00096">
    <property type="entry name" value="zf-C2H2"/>
    <property type="match status" value="7"/>
</dbReference>
<dbReference type="SMART" id="SM00431">
    <property type="entry name" value="SCAN"/>
    <property type="match status" value="1"/>
</dbReference>
<dbReference type="SMART" id="SM00355">
    <property type="entry name" value="ZnF_C2H2"/>
    <property type="match status" value="7"/>
</dbReference>
<dbReference type="SUPFAM" id="SSF57667">
    <property type="entry name" value="beta-beta-alpha zinc fingers"/>
    <property type="match status" value="4"/>
</dbReference>
<dbReference type="SUPFAM" id="SSF47353">
    <property type="entry name" value="Retrovirus capsid dimerization domain-like"/>
    <property type="match status" value="1"/>
</dbReference>
<dbReference type="PROSITE" id="PS50804">
    <property type="entry name" value="SCAN_BOX"/>
    <property type="match status" value="1"/>
</dbReference>
<dbReference type="PROSITE" id="PS00028">
    <property type="entry name" value="ZINC_FINGER_C2H2_1"/>
    <property type="match status" value="6"/>
</dbReference>
<dbReference type="PROSITE" id="PS50157">
    <property type="entry name" value="ZINC_FINGER_C2H2_2"/>
    <property type="match status" value="7"/>
</dbReference>
<sequence length="555" mass="63012">MTKVVGMATVLGPRPPQESMGPSPIKVEEDEEKDKCCPTLELSHKHFRQSGNQDTLEPMGPSTIKAEEDESKDKCRPNLEISRKSFKQFGYQDTLEQLGPSTIKAEEDDEKDKGHPSPEISRQRFRQFGYHDTPGPREALSQLRVLCCEWLQPEIHTKEQILELLVLEQFLTILPRELQTWVQQHCPESAEEAVTLLEDLEQELDEPGLQVSSPPNEQKQSWEKMSTSGTAMESLSSTETQHVDASPKYEFWGPLYIQETGEEEVFTQDPRKRQGFKSNPQKEDSADEHRSSEEESHADGLKRTVIPMIPANKYGSRSERQWANNLERERGTKASLQDTGSRKGAEPASTRPAPGEKRYICAECGKAFSNSSNLTKHRRTHTGEKPYVCTKCGKAFSHSSNLTLHYRTHLVDRPYDCKCGKAFGQSSDLLKHQRMHTEEAPYQCKDCGKAFSGKGSLIRHYRIHTGEKPYQCNECGKSFSQHAGLSSHQRLHTGEKPYKCKECGKAFNHSSNFNKHHRIHTGEKPYWCSHCGKTFCSKSNLSKHQRVHTGEGEVQ</sequence>
<proteinExistence type="evidence at transcript level"/>
<gene>
    <name type="primary">Zscan21</name>
    <name type="synonym">Zfp-38</name>
    <name type="synonym">Zfp38</name>
    <name type="synonym">Zipro1</name>
    <name type="synonym">Znf38</name>
</gene>
<comment type="function">
    <text evidence="5 7">Strong transcriptional activator (PubMed:1284028). Plays an important role in spermatogenesis; essential for the progression of meiotic prophase I in spermatocytes (PubMed:27492080).</text>
</comment>
<comment type="subcellular location">
    <subcellularLocation>
        <location evidence="6">Nucleus</location>
    </subcellularLocation>
</comment>
<comment type="tissue specificity">
    <text evidence="5 6 7">Expressed predominantly in the spermatocytes and spermatids of adult testes. It is also present at lower levels in the ovary, brain, spleen, embryo and fetus.</text>
</comment>
<comment type="developmental stage">
    <text evidence="6 7">First detected between 2 and 3 weeks after birth, in parallel with the onset and progression of meiosis. It is expressed during oogenesis from the pachytene stage of meiotic prophase through to postmeiotic cells. Expression in testis starts from postnatal day 7 (PND7) and expression remains constant until PND28 (PubMed:27492080).</text>
</comment>
<comment type="disruption phenotype">
    <text evidence="7">Male germ-cell-specific conditional knockout results in complete male infertility and meiotic arrest in spermatocytes (PubMed:27492080). Spermatocytes show impaired chromosomal synapsis and DNA double-strand breaks (DSB) repair and a significantly reduced expression of DSB repair-associated genes (PubMed:27492080).</text>
</comment>
<comment type="similarity">
    <text evidence="8">Belongs to the krueppel C2H2-type zinc-finger protein family.</text>
</comment>
<name>ZSC21_MOUSE</name>
<reference key="1">
    <citation type="journal article" date="1992" name="Dev. Biol.">
        <title>Expression of a mouse zinc finger protein gene in both spermatocytes and oocytes during meiosis.</title>
        <authorList>
            <person name="Noce T."/>
            <person name="Fujiwara Y."/>
            <person name="Sezaki M."/>
            <person name="Fujimoto H."/>
            <person name="Higashinakagawa T."/>
        </authorList>
    </citation>
    <scope>NUCLEOTIDE SEQUENCE [MRNA]</scope>
    <scope>TISSUE SPECIFICITY</scope>
    <scope>DEVELOPMENTAL STAGE</scope>
    <scope>SUBCELLULAR LOCATION</scope>
    <source>
        <strain>BTBRTF</strain>
        <tissue>Spermatocyte</tissue>
    </source>
</reference>
<reference key="2">
    <citation type="journal article" date="1992" name="Mech. Dev.">
        <title>The ubiquitous transactivator Zfp-38 is upregulated during spermatogenesis with differential transcription.</title>
        <authorList>
            <person name="Chowdhury K."/>
        </authorList>
    </citation>
    <scope>NUCLEOTIDE SEQUENCE [MRNA]</scope>
    <scope>FUNCTION</scope>
    <scope>TISSUE SPECIFICITY</scope>
    <source>
        <strain>C57BL/6J</strain>
    </source>
</reference>
<reference key="3">
    <citation type="journal article" date="1996" name="Development">
        <title>Granule cell specification in the developing mouse brain as defined by expression of the zinc finger transcription factor RU49.</title>
        <authorList>
            <person name="Yang X.W."/>
            <person name="Zhong R."/>
            <person name="Heintz N."/>
        </authorList>
    </citation>
    <scope>NUCLEOTIDE SEQUENCE [MRNA]</scope>
    <source>
        <tissue>Brain</tissue>
    </source>
</reference>
<reference key="4">
    <citation type="journal article" date="2005" name="Science">
        <title>The transcriptional landscape of the mammalian genome.</title>
        <authorList>
            <person name="Carninci P."/>
            <person name="Kasukawa T."/>
            <person name="Katayama S."/>
            <person name="Gough J."/>
            <person name="Frith M.C."/>
            <person name="Maeda N."/>
            <person name="Oyama R."/>
            <person name="Ravasi T."/>
            <person name="Lenhard B."/>
            <person name="Wells C."/>
            <person name="Kodzius R."/>
            <person name="Shimokawa K."/>
            <person name="Bajic V.B."/>
            <person name="Brenner S.E."/>
            <person name="Batalov S."/>
            <person name="Forrest A.R."/>
            <person name="Zavolan M."/>
            <person name="Davis M.J."/>
            <person name="Wilming L.G."/>
            <person name="Aidinis V."/>
            <person name="Allen J.E."/>
            <person name="Ambesi-Impiombato A."/>
            <person name="Apweiler R."/>
            <person name="Aturaliya R.N."/>
            <person name="Bailey T.L."/>
            <person name="Bansal M."/>
            <person name="Baxter L."/>
            <person name="Beisel K.W."/>
            <person name="Bersano T."/>
            <person name="Bono H."/>
            <person name="Chalk A.M."/>
            <person name="Chiu K.P."/>
            <person name="Choudhary V."/>
            <person name="Christoffels A."/>
            <person name="Clutterbuck D.R."/>
            <person name="Crowe M.L."/>
            <person name="Dalla E."/>
            <person name="Dalrymple B.P."/>
            <person name="de Bono B."/>
            <person name="Della Gatta G."/>
            <person name="di Bernardo D."/>
            <person name="Down T."/>
            <person name="Engstrom P."/>
            <person name="Fagiolini M."/>
            <person name="Faulkner G."/>
            <person name="Fletcher C.F."/>
            <person name="Fukushima T."/>
            <person name="Furuno M."/>
            <person name="Futaki S."/>
            <person name="Gariboldi M."/>
            <person name="Georgii-Hemming P."/>
            <person name="Gingeras T.R."/>
            <person name="Gojobori T."/>
            <person name="Green R.E."/>
            <person name="Gustincich S."/>
            <person name="Harbers M."/>
            <person name="Hayashi Y."/>
            <person name="Hensch T.K."/>
            <person name="Hirokawa N."/>
            <person name="Hill D."/>
            <person name="Huminiecki L."/>
            <person name="Iacono M."/>
            <person name="Ikeo K."/>
            <person name="Iwama A."/>
            <person name="Ishikawa T."/>
            <person name="Jakt M."/>
            <person name="Kanapin A."/>
            <person name="Katoh M."/>
            <person name="Kawasawa Y."/>
            <person name="Kelso J."/>
            <person name="Kitamura H."/>
            <person name="Kitano H."/>
            <person name="Kollias G."/>
            <person name="Krishnan S.P."/>
            <person name="Kruger A."/>
            <person name="Kummerfeld S.K."/>
            <person name="Kurochkin I.V."/>
            <person name="Lareau L.F."/>
            <person name="Lazarevic D."/>
            <person name="Lipovich L."/>
            <person name="Liu J."/>
            <person name="Liuni S."/>
            <person name="McWilliam S."/>
            <person name="Madan Babu M."/>
            <person name="Madera M."/>
            <person name="Marchionni L."/>
            <person name="Matsuda H."/>
            <person name="Matsuzawa S."/>
            <person name="Miki H."/>
            <person name="Mignone F."/>
            <person name="Miyake S."/>
            <person name="Morris K."/>
            <person name="Mottagui-Tabar S."/>
            <person name="Mulder N."/>
            <person name="Nakano N."/>
            <person name="Nakauchi H."/>
            <person name="Ng P."/>
            <person name="Nilsson R."/>
            <person name="Nishiguchi S."/>
            <person name="Nishikawa S."/>
            <person name="Nori F."/>
            <person name="Ohara O."/>
            <person name="Okazaki Y."/>
            <person name="Orlando V."/>
            <person name="Pang K.C."/>
            <person name="Pavan W.J."/>
            <person name="Pavesi G."/>
            <person name="Pesole G."/>
            <person name="Petrovsky N."/>
            <person name="Piazza S."/>
            <person name="Reed J."/>
            <person name="Reid J.F."/>
            <person name="Ring B.Z."/>
            <person name="Ringwald M."/>
            <person name="Rost B."/>
            <person name="Ruan Y."/>
            <person name="Salzberg S.L."/>
            <person name="Sandelin A."/>
            <person name="Schneider C."/>
            <person name="Schoenbach C."/>
            <person name="Sekiguchi K."/>
            <person name="Semple C.A."/>
            <person name="Seno S."/>
            <person name="Sessa L."/>
            <person name="Sheng Y."/>
            <person name="Shibata Y."/>
            <person name="Shimada H."/>
            <person name="Shimada K."/>
            <person name="Silva D."/>
            <person name="Sinclair B."/>
            <person name="Sperling S."/>
            <person name="Stupka E."/>
            <person name="Sugiura K."/>
            <person name="Sultana R."/>
            <person name="Takenaka Y."/>
            <person name="Taki K."/>
            <person name="Tammoja K."/>
            <person name="Tan S.L."/>
            <person name="Tang S."/>
            <person name="Taylor M.S."/>
            <person name="Tegner J."/>
            <person name="Teichmann S.A."/>
            <person name="Ueda H.R."/>
            <person name="van Nimwegen E."/>
            <person name="Verardo R."/>
            <person name="Wei C.L."/>
            <person name="Yagi K."/>
            <person name="Yamanishi H."/>
            <person name="Zabarovsky E."/>
            <person name="Zhu S."/>
            <person name="Zimmer A."/>
            <person name="Hide W."/>
            <person name="Bult C."/>
            <person name="Grimmond S.M."/>
            <person name="Teasdale R.D."/>
            <person name="Liu E.T."/>
            <person name="Brusic V."/>
            <person name="Quackenbush J."/>
            <person name="Wahlestedt C."/>
            <person name="Mattick J.S."/>
            <person name="Hume D.A."/>
            <person name="Kai C."/>
            <person name="Sasaki D."/>
            <person name="Tomaru Y."/>
            <person name="Fukuda S."/>
            <person name="Kanamori-Katayama M."/>
            <person name="Suzuki M."/>
            <person name="Aoki J."/>
            <person name="Arakawa T."/>
            <person name="Iida J."/>
            <person name="Imamura K."/>
            <person name="Itoh M."/>
            <person name="Kato T."/>
            <person name="Kawaji H."/>
            <person name="Kawagashira N."/>
            <person name="Kawashima T."/>
            <person name="Kojima M."/>
            <person name="Kondo S."/>
            <person name="Konno H."/>
            <person name="Nakano K."/>
            <person name="Ninomiya N."/>
            <person name="Nishio T."/>
            <person name="Okada M."/>
            <person name="Plessy C."/>
            <person name="Shibata K."/>
            <person name="Shiraki T."/>
            <person name="Suzuki S."/>
            <person name="Tagami M."/>
            <person name="Waki K."/>
            <person name="Watahiki A."/>
            <person name="Okamura-Oho Y."/>
            <person name="Suzuki H."/>
            <person name="Kawai J."/>
            <person name="Hayashizaki Y."/>
        </authorList>
    </citation>
    <scope>NUCLEOTIDE SEQUENCE [LARGE SCALE MRNA]</scope>
    <source>
        <strain>C57BL/6J</strain>
        <tissue>Heart</tissue>
    </source>
</reference>
<reference key="5">
    <citation type="submission" date="2005-09" db="EMBL/GenBank/DDBJ databases">
        <authorList>
            <person name="Mural R.J."/>
            <person name="Adams M.D."/>
            <person name="Myers E.W."/>
            <person name="Smith H.O."/>
            <person name="Venter J.C."/>
        </authorList>
    </citation>
    <scope>NUCLEOTIDE SEQUENCE [LARGE SCALE GENOMIC DNA]</scope>
</reference>
<reference key="6">
    <citation type="journal article" date="2004" name="Genome Res.">
        <title>The status, quality, and expansion of the NIH full-length cDNA project: the Mammalian Gene Collection (MGC).</title>
        <authorList>
            <consortium name="The MGC Project Team"/>
        </authorList>
    </citation>
    <scope>NUCLEOTIDE SEQUENCE [LARGE SCALE MRNA]</scope>
    <source>
        <strain>FVB/N</strain>
        <tissue>Mammary tumor</tissue>
    </source>
</reference>
<reference key="7">
    <citation type="journal article" date="2016" name="Reproduction">
        <title>Transcription factor ZFP38 is essential for meiosis prophase I in male mice.</title>
        <authorList>
            <person name="Yan Z."/>
            <person name="Fan D."/>
            <person name="Meng Q."/>
            <person name="Yang J."/>
            <person name="Zhao W."/>
            <person name="Guo F."/>
            <person name="Song D."/>
            <person name="Guo R."/>
            <person name="Sun K."/>
            <person name="Wang J."/>
        </authorList>
    </citation>
    <scope>FUNCTION</scope>
    <scope>DISRUPTION PHENOTYPE</scope>
    <scope>TISSUE SPECIFICITY</scope>
</reference>
<protein>
    <recommendedName>
        <fullName>Zinc finger and SCAN domain-containing protein 21</fullName>
    </recommendedName>
    <alternativeName>
        <fullName>CtFIN51</fullName>
    </alternativeName>
    <alternativeName>
        <fullName>Transcription factor RU49</fullName>
    </alternativeName>
    <alternativeName>
        <fullName>Zinc finger protein 38</fullName>
        <shortName>Zfp-38</shortName>
    </alternativeName>
</protein>
<feature type="chain" id="PRO_0000047296" description="Zinc finger and SCAN domain-containing protein 21">
    <location>
        <begin position="1"/>
        <end position="555"/>
    </location>
</feature>
<feature type="repeat" description="1-1">
    <location>
        <begin position="18"/>
        <end position="56"/>
    </location>
</feature>
<feature type="repeat" description="1-2">
    <location>
        <begin position="57"/>
        <end position="95"/>
    </location>
</feature>
<feature type="repeat" description="1-3">
    <location>
        <begin position="96"/>
        <end position="134"/>
    </location>
</feature>
<feature type="domain" description="SCAN box" evidence="3">
    <location>
        <begin position="122"/>
        <end position="204"/>
    </location>
</feature>
<feature type="zinc finger region" description="C2H2-type 1" evidence="2">
    <location>
        <begin position="359"/>
        <end position="381"/>
    </location>
</feature>
<feature type="zinc finger region" description="C2H2-type 2" evidence="2">
    <location>
        <begin position="387"/>
        <end position="409"/>
    </location>
</feature>
<feature type="zinc finger region" description="C2H2-type 3" evidence="2">
    <location>
        <begin position="415"/>
        <end position="436"/>
    </location>
</feature>
<feature type="zinc finger region" description="C2H2-type 4" evidence="2">
    <location>
        <begin position="442"/>
        <end position="464"/>
    </location>
</feature>
<feature type="zinc finger region" description="C2H2-type 5" evidence="2">
    <location>
        <begin position="470"/>
        <end position="492"/>
    </location>
</feature>
<feature type="zinc finger region" description="C2H2-type 6" evidence="2">
    <location>
        <begin position="498"/>
        <end position="520"/>
    </location>
</feature>
<feature type="zinc finger region" description="C2H2-type 7" evidence="2">
    <location>
        <begin position="526"/>
        <end position="548"/>
    </location>
</feature>
<feature type="region of interest" description="Disordered" evidence="4">
    <location>
        <begin position="1"/>
        <end position="74"/>
    </location>
</feature>
<feature type="region of interest" description="3 X 39 AA approximate tandem repeats">
    <location>
        <begin position="18"/>
        <end position="134"/>
    </location>
</feature>
<feature type="region of interest" description="Disordered" evidence="4">
    <location>
        <begin position="102"/>
        <end position="133"/>
    </location>
</feature>
<feature type="region of interest" description="Disordered" evidence="4">
    <location>
        <begin position="204"/>
        <end position="243"/>
    </location>
</feature>
<feature type="region of interest" description="Disordered" evidence="4">
    <location>
        <begin position="263"/>
        <end position="354"/>
    </location>
</feature>
<feature type="compositionally biased region" description="Polar residues" evidence="4">
    <location>
        <begin position="210"/>
        <end position="240"/>
    </location>
</feature>
<feature type="compositionally biased region" description="Basic and acidic residues" evidence="4">
    <location>
        <begin position="280"/>
        <end position="302"/>
    </location>
</feature>
<feature type="compositionally biased region" description="Basic and acidic residues" evidence="4">
    <location>
        <begin position="316"/>
        <end position="332"/>
    </location>
</feature>
<feature type="cross-link" description="Glycyl lysine isopeptide (Lys-Gly) (interchain with G-Cter in SUMO2)" evidence="1">
    <location>
        <position position="26"/>
    </location>
</feature>
<feature type="cross-link" description="Glycyl lysine isopeptide (Lys-Gly) (interchain with G-Cter in SUMO2)" evidence="1">
    <location>
        <position position="302"/>
    </location>
</feature>
<feature type="cross-link" description="Glycyl lysine isopeptide (Lys-Gly) (interchain with G-Cter in SUMO2)" evidence="1">
    <location>
        <position position="313"/>
    </location>
</feature>
<feature type="cross-link" description="Glycyl lysine isopeptide (Lys-Gly) (interchain with G-Cter in SUMO2)" evidence="1">
    <location>
        <position position="431"/>
    </location>
</feature>
<feature type="sequence conflict" description="In Ref. 1; BAA01480." evidence="8" ref="1">
    <original>A</original>
    <variation>T</variation>
    <location>
        <position position="193"/>
    </location>
</feature>
<feature type="sequence conflict" description="In Ref. 3; AAB03786." evidence="8" ref="3">
    <original>N</original>
    <variation>S</variation>
    <location>
        <position position="216"/>
    </location>
</feature>
<feature type="sequence conflict" description="In Ref. 3; AAB03786." evidence="8" ref="3">
    <original>S</original>
    <variation>P</variation>
    <location>
        <position position="234"/>
    </location>
</feature>
<feature type="sequence conflict" description="In Ref. 3; AAB03786." evidence="8" ref="3">
    <original>ASLQDTGSRKGAEP</original>
    <variation>PLFKTQVPGRGRA</variation>
    <location>
        <begin position="334"/>
        <end position="347"/>
    </location>
</feature>
<feature type="sequence conflict" description="In Ref. 3; AAB03786." evidence="8" ref="3">
    <original>NL</original>
    <variation>KV</variation>
    <location>
        <begin position="401"/>
        <end position="402"/>
    </location>
</feature>
<feature type="sequence conflict" description="In Ref. 3; AAB03786." evidence="8" ref="3">
    <original>S</original>
    <variation>E</variation>
    <location>
        <position position="478"/>
    </location>
</feature>
<feature type="sequence conflict" description="In Ref. 2; CAA45280." evidence="8" ref="2">
    <original>E</original>
    <variation>K</variation>
    <location>
        <position position="495"/>
    </location>
</feature>
<feature type="sequence conflict" description="In Ref. 2; CAA45280." evidence="8" ref="2">
    <original>F</original>
    <variation>L</variation>
    <location>
        <position position="507"/>
    </location>
</feature>
<feature type="sequence conflict" description="In Ref. 2; CAA45280." evidence="8" ref="2">
    <original>S</original>
    <variation>N</variation>
    <location>
        <position position="510"/>
    </location>
</feature>
<evidence type="ECO:0000250" key="1">
    <source>
        <dbReference type="UniProtKB" id="Q9Y5A6"/>
    </source>
</evidence>
<evidence type="ECO:0000255" key="2">
    <source>
        <dbReference type="PROSITE-ProRule" id="PRU00042"/>
    </source>
</evidence>
<evidence type="ECO:0000255" key="3">
    <source>
        <dbReference type="PROSITE-ProRule" id="PRU00187"/>
    </source>
</evidence>
<evidence type="ECO:0000256" key="4">
    <source>
        <dbReference type="SAM" id="MobiDB-lite"/>
    </source>
</evidence>
<evidence type="ECO:0000269" key="5">
    <source>
    </source>
</evidence>
<evidence type="ECO:0000269" key="6">
    <source>
    </source>
</evidence>
<evidence type="ECO:0000269" key="7">
    <source>
    </source>
</evidence>
<evidence type="ECO:0000305" key="8"/>